<comment type="function">
    <text evidence="1">This is one of the proteins that bind and probably mediate the attachment of the 5S RNA into the large ribosomal subunit, where it forms part of the central protuberance.</text>
</comment>
<comment type="subunit">
    <text evidence="1">Part of the 50S ribosomal subunit; part of the 5S rRNA/L5/L18/L25 subcomplex. Contacts the 5S and 23S rRNAs.</text>
</comment>
<comment type="similarity">
    <text evidence="1">Belongs to the universal ribosomal protein uL18 family.</text>
</comment>
<sequence>MTAKVLKRKIALRIKRKRRIRGKISGVATCPRVSIFKSNRTLYVQAIDDVTATTLAAVDGRKLGIKANKEGAVTLAKEFAKALKAKKIDVAIFDRNGYLYHGVIAAFAEALRENGIKL</sequence>
<proteinExistence type="inferred from homology"/>
<dbReference type="EMBL" id="CP000792">
    <property type="protein sequence ID" value="EAT98102.1"/>
    <property type="molecule type" value="Genomic_DNA"/>
</dbReference>
<dbReference type="RefSeq" id="WP_012140559.1">
    <property type="nucleotide sequence ID" value="NC_009802.2"/>
</dbReference>
<dbReference type="SMR" id="A7ZFZ6"/>
<dbReference type="STRING" id="360104.CCC13826_1760"/>
<dbReference type="KEGG" id="cco:CCC13826_1760"/>
<dbReference type="eggNOG" id="COG0256">
    <property type="taxonomic scope" value="Bacteria"/>
</dbReference>
<dbReference type="HOGENOM" id="CLU_098841_0_1_7"/>
<dbReference type="OrthoDB" id="9810939at2"/>
<dbReference type="Proteomes" id="UP000001121">
    <property type="component" value="Chromosome"/>
</dbReference>
<dbReference type="GO" id="GO:0022625">
    <property type="term" value="C:cytosolic large ribosomal subunit"/>
    <property type="evidence" value="ECO:0007669"/>
    <property type="project" value="TreeGrafter"/>
</dbReference>
<dbReference type="GO" id="GO:0008097">
    <property type="term" value="F:5S rRNA binding"/>
    <property type="evidence" value="ECO:0007669"/>
    <property type="project" value="TreeGrafter"/>
</dbReference>
<dbReference type="GO" id="GO:0003735">
    <property type="term" value="F:structural constituent of ribosome"/>
    <property type="evidence" value="ECO:0007669"/>
    <property type="project" value="InterPro"/>
</dbReference>
<dbReference type="GO" id="GO:0006412">
    <property type="term" value="P:translation"/>
    <property type="evidence" value="ECO:0007669"/>
    <property type="project" value="UniProtKB-UniRule"/>
</dbReference>
<dbReference type="CDD" id="cd00432">
    <property type="entry name" value="Ribosomal_L18_L5e"/>
    <property type="match status" value="1"/>
</dbReference>
<dbReference type="Gene3D" id="3.30.420.100">
    <property type="match status" value="1"/>
</dbReference>
<dbReference type="HAMAP" id="MF_01337_B">
    <property type="entry name" value="Ribosomal_uL18_B"/>
    <property type="match status" value="1"/>
</dbReference>
<dbReference type="InterPro" id="IPR004389">
    <property type="entry name" value="Ribosomal_uL18_bac-type"/>
</dbReference>
<dbReference type="InterPro" id="IPR005484">
    <property type="entry name" value="Ribosomal_uL18_bac/euk"/>
</dbReference>
<dbReference type="NCBIfam" id="TIGR00060">
    <property type="entry name" value="L18_bact"/>
    <property type="match status" value="1"/>
</dbReference>
<dbReference type="PANTHER" id="PTHR12899">
    <property type="entry name" value="39S RIBOSOMAL PROTEIN L18, MITOCHONDRIAL"/>
    <property type="match status" value="1"/>
</dbReference>
<dbReference type="PANTHER" id="PTHR12899:SF3">
    <property type="entry name" value="LARGE RIBOSOMAL SUBUNIT PROTEIN UL18M"/>
    <property type="match status" value="1"/>
</dbReference>
<dbReference type="Pfam" id="PF00861">
    <property type="entry name" value="Ribosomal_L18p"/>
    <property type="match status" value="1"/>
</dbReference>
<dbReference type="SUPFAM" id="SSF53137">
    <property type="entry name" value="Translational machinery components"/>
    <property type="match status" value="1"/>
</dbReference>
<feature type="chain" id="PRO_1000053004" description="Large ribosomal subunit protein uL18">
    <location>
        <begin position="1"/>
        <end position="118"/>
    </location>
</feature>
<keyword id="KW-0687">Ribonucleoprotein</keyword>
<keyword id="KW-0689">Ribosomal protein</keyword>
<keyword id="KW-0694">RNA-binding</keyword>
<keyword id="KW-0699">rRNA-binding</keyword>
<protein>
    <recommendedName>
        <fullName evidence="1">Large ribosomal subunit protein uL18</fullName>
    </recommendedName>
    <alternativeName>
        <fullName evidence="2">50S ribosomal protein L18</fullName>
    </alternativeName>
</protein>
<accession>A7ZFZ6</accession>
<evidence type="ECO:0000255" key="1">
    <source>
        <dbReference type="HAMAP-Rule" id="MF_01337"/>
    </source>
</evidence>
<evidence type="ECO:0000305" key="2"/>
<name>RL18_CAMC1</name>
<reference key="1">
    <citation type="submission" date="2007-10" db="EMBL/GenBank/DDBJ databases">
        <title>Genome sequence of Campylobacter concisus 13826 isolated from human feces.</title>
        <authorList>
            <person name="Fouts D.E."/>
            <person name="Mongodin E.F."/>
            <person name="Puiu D."/>
            <person name="Sebastian Y."/>
            <person name="Miller W.G."/>
            <person name="Mandrell R.E."/>
            <person name="On S."/>
            <person name="Nelson K.E."/>
        </authorList>
    </citation>
    <scope>NUCLEOTIDE SEQUENCE [LARGE SCALE GENOMIC DNA]</scope>
    <source>
        <strain>13826</strain>
    </source>
</reference>
<gene>
    <name evidence="1" type="primary">rplR</name>
    <name type="ordered locus">Ccon26_18690</name>
    <name type="ORF">CCC13826_1760</name>
</gene>
<organism>
    <name type="scientific">Campylobacter concisus (strain 13826)</name>
    <dbReference type="NCBI Taxonomy" id="360104"/>
    <lineage>
        <taxon>Bacteria</taxon>
        <taxon>Pseudomonadati</taxon>
        <taxon>Campylobacterota</taxon>
        <taxon>Epsilonproteobacteria</taxon>
        <taxon>Campylobacterales</taxon>
        <taxon>Campylobacteraceae</taxon>
        <taxon>Campylobacter</taxon>
    </lineage>
</organism>